<dbReference type="EC" id="6.3.4.5" evidence="4"/>
<dbReference type="EMBL" id="X12459">
    <property type="protein sequence ID" value="CAA30999.1"/>
    <property type="molecule type" value="mRNA"/>
</dbReference>
<dbReference type="EMBL" id="M36708">
    <property type="protein sequence ID" value="AAA40771.1"/>
    <property type="molecule type" value="mRNA"/>
</dbReference>
<dbReference type="EMBL" id="BC063146">
    <property type="protein sequence ID" value="AAH63146.1"/>
    <property type="molecule type" value="mRNA"/>
</dbReference>
<dbReference type="PIR" id="S01440">
    <property type="entry name" value="AJRTRS"/>
</dbReference>
<dbReference type="RefSeq" id="NP_037289.1">
    <property type="nucleotide sequence ID" value="NM_013157.4"/>
</dbReference>
<dbReference type="RefSeq" id="XP_006233973.1">
    <property type="nucleotide sequence ID" value="XM_006233911.5"/>
</dbReference>
<dbReference type="SMR" id="P09034"/>
<dbReference type="BioGRID" id="247727">
    <property type="interactions" value="2"/>
</dbReference>
<dbReference type="FunCoup" id="P09034">
    <property type="interactions" value="1081"/>
</dbReference>
<dbReference type="IntAct" id="P09034">
    <property type="interactions" value="1"/>
</dbReference>
<dbReference type="STRING" id="10116.ENSRNOP00000076301"/>
<dbReference type="iPTMnet" id="P09034"/>
<dbReference type="PhosphoSitePlus" id="P09034"/>
<dbReference type="jPOST" id="P09034"/>
<dbReference type="PaxDb" id="10116-ENSRNOP00000012075"/>
<dbReference type="Ensembl" id="ENSRNOT00000093365.2">
    <property type="protein sequence ID" value="ENSRNOP00000076301.1"/>
    <property type="gene ID" value="ENSRNOG00000008837.7"/>
</dbReference>
<dbReference type="GeneID" id="25698"/>
<dbReference type="KEGG" id="rno:25698"/>
<dbReference type="UCSC" id="RGD:2163">
    <property type="organism name" value="rat"/>
</dbReference>
<dbReference type="AGR" id="RGD:2163"/>
<dbReference type="CTD" id="445"/>
<dbReference type="RGD" id="2163">
    <property type="gene designation" value="Ass1"/>
</dbReference>
<dbReference type="eggNOG" id="KOG1706">
    <property type="taxonomic scope" value="Eukaryota"/>
</dbReference>
<dbReference type="GeneTree" id="ENSGT00390000004524"/>
<dbReference type="HOGENOM" id="CLU_032784_4_2_1"/>
<dbReference type="InParanoid" id="P09034"/>
<dbReference type="OMA" id="ACGAFHI"/>
<dbReference type="OrthoDB" id="1688907at2759"/>
<dbReference type="PhylomeDB" id="P09034"/>
<dbReference type="TreeFam" id="TF300736"/>
<dbReference type="SABIO-RK" id="P09034"/>
<dbReference type="UniPathway" id="UPA00068">
    <property type="reaction ID" value="UER00113"/>
</dbReference>
<dbReference type="UniPathway" id="UPA00158">
    <property type="reaction ID" value="UER00272"/>
</dbReference>
<dbReference type="PRO" id="PR:P09034"/>
<dbReference type="Proteomes" id="UP000002494">
    <property type="component" value="Chromosome 3"/>
</dbReference>
<dbReference type="Bgee" id="ENSRNOG00000008837">
    <property type="expression patterns" value="Expressed in liver and 18 other cell types or tissues"/>
</dbReference>
<dbReference type="GO" id="GO:0070852">
    <property type="term" value="C:cell body fiber"/>
    <property type="evidence" value="ECO:0000314"/>
    <property type="project" value="RGD"/>
</dbReference>
<dbReference type="GO" id="GO:0005737">
    <property type="term" value="C:cytoplasm"/>
    <property type="evidence" value="ECO:0000318"/>
    <property type="project" value="GO_Central"/>
</dbReference>
<dbReference type="GO" id="GO:0005829">
    <property type="term" value="C:cytosol"/>
    <property type="evidence" value="ECO:0000250"/>
    <property type="project" value="UniProtKB"/>
</dbReference>
<dbReference type="GO" id="GO:0005741">
    <property type="term" value="C:mitochondrial outer membrane"/>
    <property type="evidence" value="ECO:0000314"/>
    <property type="project" value="RGD"/>
</dbReference>
<dbReference type="GO" id="GO:0005739">
    <property type="term" value="C:mitochondrion"/>
    <property type="evidence" value="ECO:0000266"/>
    <property type="project" value="RGD"/>
</dbReference>
<dbReference type="GO" id="GO:0043025">
    <property type="term" value="C:neuronal cell body"/>
    <property type="evidence" value="ECO:0000314"/>
    <property type="project" value="RGD"/>
</dbReference>
<dbReference type="GO" id="GO:0005654">
    <property type="term" value="C:nucleoplasm"/>
    <property type="evidence" value="ECO:0007669"/>
    <property type="project" value="Ensembl"/>
</dbReference>
<dbReference type="GO" id="GO:0043204">
    <property type="term" value="C:perikaryon"/>
    <property type="evidence" value="ECO:0000314"/>
    <property type="project" value="RGD"/>
</dbReference>
<dbReference type="GO" id="GO:0016597">
    <property type="term" value="F:amino acid binding"/>
    <property type="evidence" value="ECO:0000266"/>
    <property type="project" value="RGD"/>
</dbReference>
<dbReference type="GO" id="GO:0004055">
    <property type="term" value="F:argininosuccinate synthase activity"/>
    <property type="evidence" value="ECO:0000314"/>
    <property type="project" value="RGD"/>
</dbReference>
<dbReference type="GO" id="GO:0005524">
    <property type="term" value="F:ATP binding"/>
    <property type="evidence" value="ECO:0007669"/>
    <property type="project" value="UniProtKB-KW"/>
</dbReference>
<dbReference type="GO" id="GO:0042802">
    <property type="term" value="F:identical protein binding"/>
    <property type="evidence" value="ECO:0000266"/>
    <property type="project" value="RGD"/>
</dbReference>
<dbReference type="GO" id="GO:0015643">
    <property type="term" value="F:toxic substance binding"/>
    <property type="evidence" value="ECO:0000353"/>
    <property type="project" value="RGD"/>
</dbReference>
<dbReference type="GO" id="GO:0006953">
    <property type="term" value="P:acute-phase response"/>
    <property type="evidence" value="ECO:0000270"/>
    <property type="project" value="RGD"/>
</dbReference>
<dbReference type="GO" id="GO:0000053">
    <property type="term" value="P:argininosuccinate metabolic process"/>
    <property type="evidence" value="ECO:0000314"/>
    <property type="project" value="RGD"/>
</dbReference>
<dbReference type="GO" id="GO:0006531">
    <property type="term" value="P:aspartate metabolic process"/>
    <property type="evidence" value="ECO:0000266"/>
    <property type="project" value="RGD"/>
</dbReference>
<dbReference type="GO" id="GO:0071418">
    <property type="term" value="P:cellular response to amine stimulus"/>
    <property type="evidence" value="ECO:0000270"/>
    <property type="project" value="RGD"/>
</dbReference>
<dbReference type="GO" id="GO:0071230">
    <property type="term" value="P:cellular response to amino acid stimulus"/>
    <property type="evidence" value="ECO:0000270"/>
    <property type="project" value="RGD"/>
</dbReference>
<dbReference type="GO" id="GO:0071242">
    <property type="term" value="P:cellular response to ammonium ion"/>
    <property type="evidence" value="ECO:0000270"/>
    <property type="project" value="RGD"/>
</dbReference>
<dbReference type="GO" id="GO:0071320">
    <property type="term" value="P:cellular response to cAMP"/>
    <property type="evidence" value="ECO:0000270"/>
    <property type="project" value="RGD"/>
</dbReference>
<dbReference type="GO" id="GO:0071549">
    <property type="term" value="P:cellular response to dexamethasone stimulus"/>
    <property type="evidence" value="ECO:0000270"/>
    <property type="project" value="RGD"/>
</dbReference>
<dbReference type="GO" id="GO:0071377">
    <property type="term" value="P:cellular response to glucagon stimulus"/>
    <property type="evidence" value="ECO:0000270"/>
    <property type="project" value="RGD"/>
</dbReference>
<dbReference type="GO" id="GO:0071499">
    <property type="term" value="P:cellular response to laminar fluid shear stress"/>
    <property type="evidence" value="ECO:0000266"/>
    <property type="project" value="RGD"/>
</dbReference>
<dbReference type="GO" id="GO:0071222">
    <property type="term" value="P:cellular response to lipopolysaccharide"/>
    <property type="evidence" value="ECO:0000270"/>
    <property type="project" value="RGD"/>
</dbReference>
<dbReference type="GO" id="GO:0071400">
    <property type="term" value="P:cellular response to oleic acid"/>
    <property type="evidence" value="ECO:0000270"/>
    <property type="project" value="RGD"/>
</dbReference>
<dbReference type="GO" id="GO:0071356">
    <property type="term" value="P:cellular response to tumor necrosis factor"/>
    <property type="evidence" value="ECO:0000270"/>
    <property type="project" value="RGD"/>
</dbReference>
<dbReference type="GO" id="GO:0071346">
    <property type="term" value="P:cellular response to type II interferon"/>
    <property type="evidence" value="ECO:0000270"/>
    <property type="project" value="RGD"/>
</dbReference>
<dbReference type="GO" id="GO:0007623">
    <property type="term" value="P:circadian rhythm"/>
    <property type="evidence" value="ECO:0000250"/>
    <property type="project" value="UniProtKB"/>
</dbReference>
<dbReference type="GO" id="GO:0000052">
    <property type="term" value="P:citrulline metabolic process"/>
    <property type="evidence" value="ECO:0000266"/>
    <property type="project" value="RGD"/>
</dbReference>
<dbReference type="GO" id="GO:0060539">
    <property type="term" value="P:diaphragm development"/>
    <property type="evidence" value="ECO:0000270"/>
    <property type="project" value="RGD"/>
</dbReference>
<dbReference type="GO" id="GO:0001822">
    <property type="term" value="P:kidney development"/>
    <property type="evidence" value="ECO:0000270"/>
    <property type="project" value="RGD"/>
</dbReference>
<dbReference type="GO" id="GO:0006526">
    <property type="term" value="P:L-arginine biosynthetic process"/>
    <property type="evidence" value="ECO:0000314"/>
    <property type="project" value="RGD"/>
</dbReference>
<dbReference type="GO" id="GO:0001889">
    <property type="term" value="P:liver development"/>
    <property type="evidence" value="ECO:0000270"/>
    <property type="project" value="RGD"/>
</dbReference>
<dbReference type="GO" id="GO:0007494">
    <property type="term" value="P:midgut development"/>
    <property type="evidence" value="ECO:0000270"/>
    <property type="project" value="RGD"/>
</dbReference>
<dbReference type="GO" id="GO:1903038">
    <property type="term" value="P:negative regulation of leukocyte cell-cell adhesion"/>
    <property type="evidence" value="ECO:0000266"/>
    <property type="project" value="RGD"/>
</dbReference>
<dbReference type="GO" id="GO:0045429">
    <property type="term" value="P:positive regulation of nitric oxide biosynthetic process"/>
    <property type="evidence" value="ECO:0000266"/>
    <property type="project" value="RGD"/>
</dbReference>
<dbReference type="GO" id="GO:0014075">
    <property type="term" value="P:response to amine"/>
    <property type="evidence" value="ECO:0000270"/>
    <property type="project" value="RGD"/>
</dbReference>
<dbReference type="GO" id="GO:0043200">
    <property type="term" value="P:response to amino acid"/>
    <property type="evidence" value="ECO:0000270"/>
    <property type="project" value="RGD"/>
</dbReference>
<dbReference type="GO" id="GO:0032355">
    <property type="term" value="P:response to estradiol"/>
    <property type="evidence" value="ECO:0000270"/>
    <property type="project" value="RGD"/>
</dbReference>
<dbReference type="GO" id="GO:0070542">
    <property type="term" value="P:response to fatty acid"/>
    <property type="evidence" value="ECO:0000270"/>
    <property type="project" value="RGD"/>
</dbReference>
<dbReference type="GO" id="GO:0051384">
    <property type="term" value="P:response to glucocorticoid"/>
    <property type="evidence" value="ECO:0000314"/>
    <property type="project" value="RGD"/>
</dbReference>
<dbReference type="GO" id="GO:0060416">
    <property type="term" value="P:response to growth hormone"/>
    <property type="evidence" value="ECO:0000270"/>
    <property type="project" value="RGD"/>
</dbReference>
<dbReference type="GO" id="GO:0032496">
    <property type="term" value="P:response to lipopolysaccharide"/>
    <property type="evidence" value="ECO:0000270"/>
    <property type="project" value="RGD"/>
</dbReference>
<dbReference type="GO" id="GO:0010046">
    <property type="term" value="P:response to mycotoxin"/>
    <property type="evidence" value="ECO:0000314"/>
    <property type="project" value="RGD"/>
</dbReference>
<dbReference type="GO" id="GO:0007584">
    <property type="term" value="P:response to nutrient"/>
    <property type="evidence" value="ECO:0000270"/>
    <property type="project" value="RGD"/>
</dbReference>
<dbReference type="GO" id="GO:0043434">
    <property type="term" value="P:response to peptide hormone"/>
    <property type="evidence" value="ECO:0000270"/>
    <property type="project" value="RGD"/>
</dbReference>
<dbReference type="GO" id="GO:0048545">
    <property type="term" value="P:response to steroid hormone"/>
    <property type="evidence" value="ECO:0000270"/>
    <property type="project" value="RGD"/>
</dbReference>
<dbReference type="GO" id="GO:0009636">
    <property type="term" value="P:response to toxic substance"/>
    <property type="evidence" value="ECO:0000270"/>
    <property type="project" value="RGD"/>
</dbReference>
<dbReference type="GO" id="GO:0009410">
    <property type="term" value="P:response to xenobiotic stimulus"/>
    <property type="evidence" value="ECO:0000270"/>
    <property type="project" value="RGD"/>
</dbReference>
<dbReference type="GO" id="GO:0010043">
    <property type="term" value="P:response to zinc ion"/>
    <property type="evidence" value="ECO:0000314"/>
    <property type="project" value="RGD"/>
</dbReference>
<dbReference type="GO" id="GO:0000050">
    <property type="term" value="P:urea cycle"/>
    <property type="evidence" value="ECO:0000314"/>
    <property type="project" value="RGD"/>
</dbReference>
<dbReference type="CDD" id="cd01999">
    <property type="entry name" value="ASS"/>
    <property type="match status" value="1"/>
</dbReference>
<dbReference type="FunFam" id="3.40.50.620:FF:000019">
    <property type="entry name" value="Argininosuccinate synthase"/>
    <property type="match status" value="1"/>
</dbReference>
<dbReference type="FunFam" id="1.20.5.470:FF:000003">
    <property type="entry name" value="Argininosuccinate synthase 1"/>
    <property type="match status" value="1"/>
</dbReference>
<dbReference type="FunFam" id="3.90.1260.10:FF:000005">
    <property type="entry name" value="Argininosuccinate synthase 1"/>
    <property type="match status" value="1"/>
</dbReference>
<dbReference type="Gene3D" id="3.90.1260.10">
    <property type="entry name" value="Argininosuccinate synthetase, chain A, domain 2"/>
    <property type="match status" value="1"/>
</dbReference>
<dbReference type="Gene3D" id="3.40.50.620">
    <property type="entry name" value="HUPs"/>
    <property type="match status" value="1"/>
</dbReference>
<dbReference type="Gene3D" id="1.20.5.470">
    <property type="entry name" value="Single helix bin"/>
    <property type="match status" value="1"/>
</dbReference>
<dbReference type="HAMAP" id="MF_00005">
    <property type="entry name" value="Arg_succ_synth_type1"/>
    <property type="match status" value="1"/>
</dbReference>
<dbReference type="InterPro" id="IPR048268">
    <property type="entry name" value="Arginosuc_syn_C"/>
</dbReference>
<dbReference type="InterPro" id="IPR048267">
    <property type="entry name" value="Arginosuc_syn_N"/>
</dbReference>
<dbReference type="InterPro" id="IPR001518">
    <property type="entry name" value="Arginosuc_synth"/>
</dbReference>
<dbReference type="InterPro" id="IPR018223">
    <property type="entry name" value="Arginosuc_synth_CS"/>
</dbReference>
<dbReference type="InterPro" id="IPR023434">
    <property type="entry name" value="Arginosuc_synth_type_1_subfam"/>
</dbReference>
<dbReference type="InterPro" id="IPR024074">
    <property type="entry name" value="AS_cat/multimer_dom_body"/>
</dbReference>
<dbReference type="InterPro" id="IPR014729">
    <property type="entry name" value="Rossmann-like_a/b/a_fold"/>
</dbReference>
<dbReference type="NCBIfam" id="TIGR00032">
    <property type="entry name" value="argG"/>
    <property type="match status" value="1"/>
</dbReference>
<dbReference type="NCBIfam" id="NF001770">
    <property type="entry name" value="PRK00509.1"/>
    <property type="match status" value="1"/>
</dbReference>
<dbReference type="PANTHER" id="PTHR11587">
    <property type="entry name" value="ARGININOSUCCINATE SYNTHASE"/>
    <property type="match status" value="1"/>
</dbReference>
<dbReference type="PANTHER" id="PTHR11587:SF2">
    <property type="entry name" value="ARGININOSUCCINATE SYNTHASE"/>
    <property type="match status" value="1"/>
</dbReference>
<dbReference type="Pfam" id="PF20979">
    <property type="entry name" value="Arginosuc_syn_C"/>
    <property type="match status" value="1"/>
</dbReference>
<dbReference type="Pfam" id="PF00764">
    <property type="entry name" value="Arginosuc_synth"/>
    <property type="match status" value="1"/>
</dbReference>
<dbReference type="SUPFAM" id="SSF52402">
    <property type="entry name" value="Adenine nucleotide alpha hydrolases-like"/>
    <property type="match status" value="1"/>
</dbReference>
<dbReference type="SUPFAM" id="SSF69864">
    <property type="entry name" value="Argininosuccinate synthetase, C-terminal domain"/>
    <property type="match status" value="1"/>
</dbReference>
<dbReference type="PROSITE" id="PS00564">
    <property type="entry name" value="ARGININOSUCCIN_SYN_1"/>
    <property type="match status" value="1"/>
</dbReference>
<dbReference type="PROSITE" id="PS00565">
    <property type="entry name" value="ARGININOSUCCIN_SYN_2"/>
    <property type="match status" value="1"/>
</dbReference>
<feature type="chain" id="PRO_0000148556" description="Argininosuccinate synthase">
    <location>
        <begin position="1"/>
        <end position="412"/>
    </location>
</feature>
<feature type="binding site" evidence="1">
    <location>
        <begin position="10"/>
        <end position="18"/>
    </location>
    <ligand>
        <name>ATP</name>
        <dbReference type="ChEBI" id="CHEBI:30616"/>
    </ligand>
</feature>
<feature type="binding site" evidence="1">
    <location>
        <position position="36"/>
    </location>
    <ligand>
        <name>ATP</name>
        <dbReference type="ChEBI" id="CHEBI:30616"/>
    </ligand>
</feature>
<feature type="binding site" evidence="2">
    <location>
        <position position="87"/>
    </location>
    <ligand>
        <name>L-citrulline</name>
        <dbReference type="ChEBI" id="CHEBI:57743"/>
    </ligand>
</feature>
<feature type="binding site" evidence="2">
    <location>
        <position position="92"/>
    </location>
    <ligand>
        <name>L-citrulline</name>
        <dbReference type="ChEBI" id="CHEBI:57743"/>
    </ligand>
</feature>
<feature type="binding site" evidence="1">
    <location>
        <begin position="115"/>
        <end position="123"/>
    </location>
    <ligand>
        <name>ATP</name>
        <dbReference type="ChEBI" id="CHEBI:30616"/>
    </ligand>
</feature>
<feature type="binding site" evidence="2">
    <location>
        <position position="119"/>
    </location>
    <ligand>
        <name>L-aspartate</name>
        <dbReference type="ChEBI" id="CHEBI:29991"/>
    </ligand>
</feature>
<feature type="binding site" evidence="2">
    <location>
        <position position="123"/>
    </location>
    <ligand>
        <name>L-aspartate</name>
        <dbReference type="ChEBI" id="CHEBI:29991"/>
    </ligand>
</feature>
<feature type="binding site" evidence="2">
    <location>
        <position position="123"/>
    </location>
    <ligand>
        <name>L-citrulline</name>
        <dbReference type="ChEBI" id="CHEBI:57743"/>
    </ligand>
</feature>
<feature type="binding site" evidence="2">
    <location>
        <position position="124"/>
    </location>
    <ligand>
        <name>L-aspartate</name>
        <dbReference type="ChEBI" id="CHEBI:29991"/>
    </ligand>
</feature>
<feature type="binding site" evidence="2">
    <location>
        <position position="127"/>
    </location>
    <ligand>
        <name>L-citrulline</name>
        <dbReference type="ChEBI" id="CHEBI:57743"/>
    </ligand>
</feature>
<feature type="binding site" evidence="2">
    <location>
        <position position="180"/>
    </location>
    <ligand>
        <name>L-citrulline</name>
        <dbReference type="ChEBI" id="CHEBI:57743"/>
    </ligand>
</feature>
<feature type="binding site" evidence="2">
    <location>
        <position position="189"/>
    </location>
    <ligand>
        <name>L-citrulline</name>
        <dbReference type="ChEBI" id="CHEBI:57743"/>
    </ligand>
</feature>
<feature type="binding site" evidence="2">
    <location>
        <position position="270"/>
    </location>
    <ligand>
        <name>L-citrulline</name>
        <dbReference type="ChEBI" id="CHEBI:57743"/>
    </ligand>
</feature>
<feature type="binding site" evidence="2">
    <location>
        <position position="282"/>
    </location>
    <ligand>
        <name>L-citrulline</name>
        <dbReference type="ChEBI" id="CHEBI:57743"/>
    </ligand>
</feature>
<feature type="modified residue" description="Phosphotyrosine" evidence="9">
    <location>
        <position position="87"/>
    </location>
</feature>
<feature type="modified residue" description="N6-acetyllysine" evidence="3">
    <location>
        <position position="112"/>
    </location>
</feature>
<feature type="modified residue" description="Phosphotyrosine" evidence="2">
    <location>
        <position position="113"/>
    </location>
</feature>
<feature type="modified residue" description="N6-acetyllysine; by CLOCK" evidence="2">
    <location>
        <position position="165"/>
    </location>
</feature>
<feature type="modified residue" description="N6-acetyllysine; by CLOCK" evidence="2">
    <location>
        <position position="176"/>
    </location>
</feature>
<feature type="modified residue" description="Phosphoserine" evidence="3">
    <location>
        <position position="177"/>
    </location>
</feature>
<feature type="modified residue" description="Phosphoserine" evidence="2">
    <location>
        <position position="180"/>
    </location>
</feature>
<feature type="modified residue" description="Phosphothreonine" evidence="9">
    <location>
        <position position="219"/>
    </location>
</feature>
<comment type="function">
    <text evidence="4 7">One of the enzymes of the urea cycle, the metabolic pathway transforming neurotoxic amonia produced by protein catabolism into inocuous urea in the liver of ureotelic animals (Probable). Catalyzes the formation of arginosuccinate from aspartate, citrulline and ATP and together with ASL it is responsible for the biosynthesis of arginine in most body tissues (Probable). Indirectly, may be involved in the control of blood pressure (PubMed:19491403).</text>
</comment>
<comment type="catalytic activity">
    <reaction evidence="4">
        <text>L-citrulline + L-aspartate + ATP = 2-(N(omega)-L-arginino)succinate + AMP + diphosphate + H(+)</text>
        <dbReference type="Rhea" id="RHEA:10932"/>
        <dbReference type="ChEBI" id="CHEBI:15378"/>
        <dbReference type="ChEBI" id="CHEBI:29991"/>
        <dbReference type="ChEBI" id="CHEBI:30616"/>
        <dbReference type="ChEBI" id="CHEBI:33019"/>
        <dbReference type="ChEBI" id="CHEBI:57472"/>
        <dbReference type="ChEBI" id="CHEBI:57743"/>
        <dbReference type="ChEBI" id="CHEBI:456215"/>
        <dbReference type="EC" id="6.3.4.5"/>
    </reaction>
</comment>
<comment type="pathway">
    <text evidence="7">Amino-acid biosynthesis; L-arginine biosynthesis; L-arginine from L-ornithine and carbamoyl phosphate: step 2/3.</text>
</comment>
<comment type="pathway">
    <text evidence="7">Nitrogen metabolism; urea cycle; (N(omega)-L-arginino)succinate from L-aspartate and L-citrulline: step 1/1.</text>
</comment>
<comment type="subunit">
    <text evidence="2 3">Homotetramer. Interacts with NMRAL1. Interacts with CLOCK; in a circadian manner (By similarity). Forms tissue-specific complexes with ASL, SLC7A1, HSP90AA1 and nitric oxide synthase NOS1, NOS2 or NOS3; the complex regulates cell-autonomous L-arginine synthesis and citrulline recycling while channeling extracellular L-arginine to nitric oxide synthesis pathway (By similarity).</text>
</comment>
<comment type="subcellular location">
    <subcellularLocation>
        <location evidence="7">Cytoplasm</location>
        <location evidence="7">Cytosol</location>
    </subcellularLocation>
</comment>
<comment type="PTM">
    <text evidence="2">Acetylated by CLOCK in a circadian manner which negatively regulates its enzyme activity. Deacetylated by histone deacetylases.</text>
</comment>
<comment type="miscellaneous">
    <text evidence="4">Binds and is activated by Bj-BPP-10c, a bioactive anti-hypertensive proline-rich decapeptide, part of the C-type natriuretic peptide precursor.</text>
</comment>
<comment type="similarity">
    <text evidence="6">Belongs to the argininosuccinate synthase family. Type 1 subfamily.</text>
</comment>
<sequence>MSSKGSVVLAYSGGLDTSCILVWLKEQGYDVIAYLANIGQKEDFEEARKKALKLGAKKVFIEDVSKEFVEEFIWPAVQSSALYEDRYLLGTSLARPCIARKQVEIAQREGAKYVSHGATGKGNDQVRFELTCYSLAPQIKVIAPWRMPEFYNRFKGRNDLMEYAKQHGIPIPVTPKSPWSMDENLMHISYEAGILENPKNQAPPGLYTKTQDPAKAPNTPDVLEIEFKKGVPVKVTNVKDGTTHSTSLDLFMYLNEVAGKHGVGRIDIVENRFIGMKSRGIYETPAGTILYHAHLDIEAFTMDREVRKIKQGLGLKFAELVYTGFWHSPECEFVRHCIDKSQERVEGKVQVSVFKGQVYILGRESPLSLYNEELVSMNVQGDYEPIDATGFININSLRLKEYHRLQSKVTAK</sequence>
<proteinExistence type="evidence at protein level"/>
<protein>
    <recommendedName>
        <fullName evidence="6">Argininosuccinate synthase</fullName>
        <ecNumber evidence="4">6.3.4.5</ecNumber>
    </recommendedName>
    <alternativeName>
        <fullName>Citrulline--aspartate ligase</fullName>
    </alternativeName>
</protein>
<organism>
    <name type="scientific">Rattus norvegicus</name>
    <name type="common">Rat</name>
    <dbReference type="NCBI Taxonomy" id="10116"/>
    <lineage>
        <taxon>Eukaryota</taxon>
        <taxon>Metazoa</taxon>
        <taxon>Chordata</taxon>
        <taxon>Craniata</taxon>
        <taxon>Vertebrata</taxon>
        <taxon>Euteleostomi</taxon>
        <taxon>Mammalia</taxon>
        <taxon>Eutheria</taxon>
        <taxon>Euarchontoglires</taxon>
        <taxon>Glires</taxon>
        <taxon>Rodentia</taxon>
        <taxon>Myomorpha</taxon>
        <taxon>Muroidea</taxon>
        <taxon>Muridae</taxon>
        <taxon>Murinae</taxon>
        <taxon>Rattus</taxon>
    </lineage>
</organism>
<accession>P09034</accession>
<gene>
    <name evidence="8" type="primary">Ass1</name>
    <name evidence="5" type="synonym">Ass</name>
</gene>
<name>ASSY_RAT</name>
<reference key="1">
    <citation type="journal article" date="1988" name="Nucleic Acids Res.">
        <title>Nucleotide sequence of the cDNA encoding the rat argininosuccinate synthetase.</title>
        <authorList>
            <person name="Surh L.C."/>
            <person name="Morris S.M."/>
            <person name="O'Brien W.E."/>
            <person name="Beaudet A.L."/>
        </authorList>
    </citation>
    <scope>NUCLEOTIDE SEQUENCE [MRNA]</scope>
    <source>
        <tissue>Kidney</tissue>
    </source>
</reference>
<reference key="2">
    <citation type="journal article" date="2004" name="Genome Res.">
        <title>The status, quality, and expansion of the NIH full-length cDNA project: the Mammalian Gene Collection (MGC).</title>
        <authorList>
            <consortium name="The MGC Project Team"/>
        </authorList>
    </citation>
    <scope>NUCLEOTIDE SEQUENCE [LARGE SCALE MRNA]</scope>
    <source>
        <tissue>Pituitary</tissue>
    </source>
</reference>
<reference key="3">
    <citation type="journal article" date="2009" name="J. Biol. Chem.">
        <title>Argininosuccinate synthetase is a functional target for a snake venom anti-hypertensive peptide: role in arginine and nitric oxide production.</title>
        <authorList>
            <person name="Guerreiro J.R."/>
            <person name="Lameu C."/>
            <person name="Oliveira E.F."/>
            <person name="Klitzke C.F."/>
            <person name="Melo R.L."/>
            <person name="Linares E."/>
            <person name="Augusto O."/>
            <person name="Fox J.W."/>
            <person name="Lebrun I."/>
            <person name="Serrano S.M."/>
            <person name="Camargo A.C."/>
        </authorList>
    </citation>
    <scope>FUNCTION</scope>
    <scope>CATALYTIC ACTIVITY</scope>
    <scope>PATHWAY</scope>
    <scope>MISCELLANEOUS</scope>
</reference>
<reference key="4">
    <citation type="journal article" date="2012" name="Nat. Commun.">
        <title>Quantitative maps of protein phosphorylation sites across 14 different rat organs and tissues.</title>
        <authorList>
            <person name="Lundby A."/>
            <person name="Secher A."/>
            <person name="Lage K."/>
            <person name="Nordsborg N.B."/>
            <person name="Dmytriyev A."/>
            <person name="Lundby C."/>
            <person name="Olsen J.V."/>
        </authorList>
    </citation>
    <scope>PHOSPHORYLATION [LARGE SCALE ANALYSIS] AT TYR-87 AND THR-219</scope>
    <scope>IDENTIFICATION BY MASS SPECTROMETRY [LARGE SCALE ANALYSIS]</scope>
</reference>
<evidence type="ECO:0000250" key="1"/>
<evidence type="ECO:0000250" key="2">
    <source>
        <dbReference type="UniProtKB" id="P00966"/>
    </source>
</evidence>
<evidence type="ECO:0000250" key="3">
    <source>
        <dbReference type="UniProtKB" id="P16460"/>
    </source>
</evidence>
<evidence type="ECO:0000269" key="4">
    <source>
    </source>
</evidence>
<evidence type="ECO:0000303" key="5">
    <source>
    </source>
</evidence>
<evidence type="ECO:0000305" key="6"/>
<evidence type="ECO:0000305" key="7">
    <source>
    </source>
</evidence>
<evidence type="ECO:0000312" key="8">
    <source>
        <dbReference type="RGD" id="2163"/>
    </source>
</evidence>
<evidence type="ECO:0007744" key="9">
    <source>
    </source>
</evidence>
<keyword id="KW-0007">Acetylation</keyword>
<keyword id="KW-0028">Amino-acid biosynthesis</keyword>
<keyword id="KW-0055">Arginine biosynthesis</keyword>
<keyword id="KW-0067">ATP-binding</keyword>
<keyword id="KW-0963">Cytoplasm</keyword>
<keyword id="KW-0436">Ligase</keyword>
<keyword id="KW-0547">Nucleotide-binding</keyword>
<keyword id="KW-0597">Phosphoprotein</keyword>
<keyword id="KW-1185">Reference proteome</keyword>
<keyword id="KW-0835">Urea cycle</keyword>